<dbReference type="EMBL" id="CP001601">
    <property type="protein sequence ID" value="ACP32032.1"/>
    <property type="molecule type" value="Genomic_DNA"/>
</dbReference>
<dbReference type="RefSeq" id="WP_010189563.1">
    <property type="nucleotide sequence ID" value="NZ_ACLH01000063.1"/>
</dbReference>
<dbReference type="SMR" id="C3PL28"/>
<dbReference type="STRING" id="548476.cauri_0433"/>
<dbReference type="GeneID" id="31923050"/>
<dbReference type="KEGG" id="car:cauri_0433"/>
<dbReference type="eggNOG" id="COG0200">
    <property type="taxonomic scope" value="Bacteria"/>
</dbReference>
<dbReference type="HOGENOM" id="CLU_055188_4_1_11"/>
<dbReference type="OrthoDB" id="9810293at2"/>
<dbReference type="Proteomes" id="UP000002077">
    <property type="component" value="Chromosome"/>
</dbReference>
<dbReference type="GO" id="GO:0022625">
    <property type="term" value="C:cytosolic large ribosomal subunit"/>
    <property type="evidence" value="ECO:0007669"/>
    <property type="project" value="TreeGrafter"/>
</dbReference>
<dbReference type="GO" id="GO:0019843">
    <property type="term" value="F:rRNA binding"/>
    <property type="evidence" value="ECO:0007669"/>
    <property type="project" value="UniProtKB-UniRule"/>
</dbReference>
<dbReference type="GO" id="GO:0003735">
    <property type="term" value="F:structural constituent of ribosome"/>
    <property type="evidence" value="ECO:0007669"/>
    <property type="project" value="InterPro"/>
</dbReference>
<dbReference type="GO" id="GO:0006412">
    <property type="term" value="P:translation"/>
    <property type="evidence" value="ECO:0007669"/>
    <property type="project" value="UniProtKB-UniRule"/>
</dbReference>
<dbReference type="FunFam" id="3.100.10.10:FF:000005">
    <property type="entry name" value="50S ribosomal protein L15"/>
    <property type="match status" value="1"/>
</dbReference>
<dbReference type="Gene3D" id="3.100.10.10">
    <property type="match status" value="1"/>
</dbReference>
<dbReference type="HAMAP" id="MF_01341">
    <property type="entry name" value="Ribosomal_uL15"/>
    <property type="match status" value="1"/>
</dbReference>
<dbReference type="InterPro" id="IPR030878">
    <property type="entry name" value="Ribosomal_uL15"/>
</dbReference>
<dbReference type="InterPro" id="IPR021131">
    <property type="entry name" value="Ribosomal_uL15/eL18"/>
</dbReference>
<dbReference type="InterPro" id="IPR036227">
    <property type="entry name" value="Ribosomal_uL15/eL18_sf"/>
</dbReference>
<dbReference type="InterPro" id="IPR005749">
    <property type="entry name" value="Ribosomal_uL15_bac-type"/>
</dbReference>
<dbReference type="InterPro" id="IPR001196">
    <property type="entry name" value="Ribosomal_uL15_CS"/>
</dbReference>
<dbReference type="NCBIfam" id="TIGR01071">
    <property type="entry name" value="rplO_bact"/>
    <property type="match status" value="1"/>
</dbReference>
<dbReference type="PANTHER" id="PTHR12934">
    <property type="entry name" value="50S RIBOSOMAL PROTEIN L15"/>
    <property type="match status" value="1"/>
</dbReference>
<dbReference type="PANTHER" id="PTHR12934:SF11">
    <property type="entry name" value="LARGE RIBOSOMAL SUBUNIT PROTEIN UL15M"/>
    <property type="match status" value="1"/>
</dbReference>
<dbReference type="Pfam" id="PF00828">
    <property type="entry name" value="Ribosomal_L27A"/>
    <property type="match status" value="1"/>
</dbReference>
<dbReference type="SUPFAM" id="SSF52080">
    <property type="entry name" value="Ribosomal proteins L15p and L18e"/>
    <property type="match status" value="1"/>
</dbReference>
<dbReference type="PROSITE" id="PS00475">
    <property type="entry name" value="RIBOSOMAL_L15"/>
    <property type="match status" value="1"/>
</dbReference>
<reference key="1">
    <citation type="journal article" date="2010" name="BMC Genomics">
        <title>Complete genome sequence and lifestyle of black-pigmented Corynebacterium aurimucosum ATCC 700975 (formerly C. nigricans CN-1) isolated from a vaginal swab of a woman with spontaneous abortion.</title>
        <authorList>
            <person name="Trost E."/>
            <person name="Gotker S."/>
            <person name="Schneider J."/>
            <person name="Schneiker-Bekel S."/>
            <person name="Szczepanowski R."/>
            <person name="Tilker A."/>
            <person name="Viehoever P."/>
            <person name="Arnold W."/>
            <person name="Bekel T."/>
            <person name="Blom J."/>
            <person name="Gartemann K.H."/>
            <person name="Linke B."/>
            <person name="Goesmann A."/>
            <person name="Puhler A."/>
            <person name="Shukla S.K."/>
            <person name="Tauch A."/>
        </authorList>
    </citation>
    <scope>NUCLEOTIDE SEQUENCE [LARGE SCALE GENOMIC DNA]</scope>
    <source>
        <strain>ATCC 700975 / DSM 44827 / CIP 107346 / CN-1</strain>
    </source>
</reference>
<gene>
    <name evidence="1" type="primary">rplO</name>
    <name type="ordered locus">cauri_0433</name>
</gene>
<evidence type="ECO:0000255" key="1">
    <source>
        <dbReference type="HAMAP-Rule" id="MF_01341"/>
    </source>
</evidence>
<evidence type="ECO:0000256" key="2">
    <source>
        <dbReference type="SAM" id="MobiDB-lite"/>
    </source>
</evidence>
<evidence type="ECO:0000305" key="3"/>
<sequence>MADIIKLHDLRPAAGSNKPKTRVGRGEASKGKTAGRGTKGTGARKQVPAAFEGGQMPIHMRLPKLKGFKNPNHVEYQVVNVADLAEAFANGGDVTVADIVAAGLVRKNQPVKVLGNGEINVKLNVTADKFSKSAVEKIEAAGGTATATK</sequence>
<protein>
    <recommendedName>
        <fullName evidence="1">Large ribosomal subunit protein uL15</fullName>
    </recommendedName>
    <alternativeName>
        <fullName evidence="3">50S ribosomal protein L15</fullName>
    </alternativeName>
</protein>
<keyword id="KW-1185">Reference proteome</keyword>
<keyword id="KW-0687">Ribonucleoprotein</keyword>
<keyword id="KW-0689">Ribosomal protein</keyword>
<keyword id="KW-0694">RNA-binding</keyword>
<keyword id="KW-0699">rRNA-binding</keyword>
<accession>C3PL28</accession>
<name>RL15_CORA7</name>
<proteinExistence type="inferred from homology"/>
<comment type="function">
    <text evidence="1">Binds to the 23S rRNA.</text>
</comment>
<comment type="subunit">
    <text evidence="1">Part of the 50S ribosomal subunit.</text>
</comment>
<comment type="similarity">
    <text evidence="1">Belongs to the universal ribosomal protein uL15 family.</text>
</comment>
<organism>
    <name type="scientific">Corynebacterium aurimucosum (strain ATCC 700975 / DSM 44827 / CIP 107346 / CN-1)</name>
    <name type="common">Corynebacterium nigricans</name>
    <dbReference type="NCBI Taxonomy" id="548476"/>
    <lineage>
        <taxon>Bacteria</taxon>
        <taxon>Bacillati</taxon>
        <taxon>Actinomycetota</taxon>
        <taxon>Actinomycetes</taxon>
        <taxon>Mycobacteriales</taxon>
        <taxon>Corynebacteriaceae</taxon>
        <taxon>Corynebacterium</taxon>
    </lineage>
</organism>
<feature type="chain" id="PRO_1000166287" description="Large ribosomal subunit protein uL15">
    <location>
        <begin position="1"/>
        <end position="149"/>
    </location>
</feature>
<feature type="region of interest" description="Disordered" evidence="2">
    <location>
        <begin position="8"/>
        <end position="49"/>
    </location>
</feature>
<feature type="compositionally biased region" description="Low complexity" evidence="2">
    <location>
        <begin position="31"/>
        <end position="45"/>
    </location>
</feature>